<feature type="chain" id="PRO_1000117806" description="8-amino-3,8-dideoxy-manno-octulosonate cytidylyltransferase">
    <location>
        <begin position="1"/>
        <end position="245"/>
    </location>
</feature>
<reference key="1">
    <citation type="submission" date="2008-12" db="EMBL/GenBank/DDBJ databases">
        <title>Complete sequence of chromosome of Shewanella baltica OS223.</title>
        <authorList>
            <consortium name="US DOE Joint Genome Institute"/>
            <person name="Lucas S."/>
            <person name="Copeland A."/>
            <person name="Lapidus A."/>
            <person name="Glavina del Rio T."/>
            <person name="Dalin E."/>
            <person name="Tice H."/>
            <person name="Bruce D."/>
            <person name="Goodwin L."/>
            <person name="Pitluck S."/>
            <person name="Chertkov O."/>
            <person name="Meincke L."/>
            <person name="Brettin T."/>
            <person name="Detter J.C."/>
            <person name="Han C."/>
            <person name="Kuske C.R."/>
            <person name="Larimer F."/>
            <person name="Land M."/>
            <person name="Hauser L."/>
            <person name="Kyrpides N."/>
            <person name="Ovchinnikova G."/>
            <person name="Brettar I."/>
            <person name="Rodrigues J."/>
            <person name="Konstantinidis K."/>
            <person name="Tiedje J."/>
        </authorList>
    </citation>
    <scope>NUCLEOTIDE SEQUENCE [LARGE SCALE GENOMIC DNA]</scope>
    <source>
        <strain>OS223</strain>
    </source>
</reference>
<proteinExistence type="inferred from homology"/>
<organism>
    <name type="scientific">Shewanella baltica (strain OS223)</name>
    <dbReference type="NCBI Taxonomy" id="407976"/>
    <lineage>
        <taxon>Bacteria</taxon>
        <taxon>Pseudomonadati</taxon>
        <taxon>Pseudomonadota</taxon>
        <taxon>Gammaproteobacteria</taxon>
        <taxon>Alteromonadales</taxon>
        <taxon>Shewanellaceae</taxon>
        <taxon>Shewanella</taxon>
    </lineage>
</organism>
<comment type="function">
    <text evidence="1">Activates KDO8N (a required 8-carbon sugar) for incorporation into bacterial lipopolysaccharide in the Shewanella genus.</text>
</comment>
<comment type="catalytic activity">
    <reaction evidence="1">
        <text>8-amino-3,8-dideoxy-alpha-D-manno-octulosonate + CTP = CMP-8-amino-3,8-dideoxy-alpha-D-manno-oct-2-ulosonate + diphosphate</text>
        <dbReference type="Rhea" id="RHEA:49284"/>
        <dbReference type="ChEBI" id="CHEBI:33019"/>
        <dbReference type="ChEBI" id="CHEBI:37563"/>
        <dbReference type="ChEBI" id="CHEBI:87091"/>
        <dbReference type="ChEBI" id="CHEBI:91089"/>
        <dbReference type="EC" id="2.7.7.90"/>
    </reaction>
</comment>
<comment type="pathway">
    <text evidence="1">Bacterial outer membrane biogenesis; lipopolysaccharide biosynthesis.</text>
</comment>
<comment type="subcellular location">
    <subcellularLocation>
        <location evidence="1">Cytoplasm</location>
    </subcellularLocation>
</comment>
<comment type="similarity">
    <text evidence="1">Belongs to the KdsB family.</text>
</comment>
<dbReference type="EC" id="2.7.7.90" evidence="1"/>
<dbReference type="EMBL" id="CP001252">
    <property type="protein sequence ID" value="ACK46488.1"/>
    <property type="molecule type" value="Genomic_DNA"/>
</dbReference>
<dbReference type="RefSeq" id="WP_006081834.1">
    <property type="nucleotide sequence ID" value="NC_011663.1"/>
</dbReference>
<dbReference type="SMR" id="B8E9F5"/>
<dbReference type="KEGG" id="sbp:Sbal223_1984"/>
<dbReference type="HOGENOM" id="CLU_065038_0_1_6"/>
<dbReference type="UniPathway" id="UPA00030"/>
<dbReference type="Proteomes" id="UP000002507">
    <property type="component" value="Chromosome"/>
</dbReference>
<dbReference type="GO" id="GO:0005829">
    <property type="term" value="C:cytosol"/>
    <property type="evidence" value="ECO:0007669"/>
    <property type="project" value="TreeGrafter"/>
</dbReference>
<dbReference type="GO" id="GO:0008690">
    <property type="term" value="F:3-deoxy-manno-octulosonate cytidylyltransferase activity"/>
    <property type="evidence" value="ECO:0007669"/>
    <property type="project" value="InterPro"/>
</dbReference>
<dbReference type="GO" id="GO:0009103">
    <property type="term" value="P:lipopolysaccharide biosynthetic process"/>
    <property type="evidence" value="ECO:0007669"/>
    <property type="project" value="UniProtKB-UniRule"/>
</dbReference>
<dbReference type="CDD" id="cd02517">
    <property type="entry name" value="CMP-KDO-Synthetase"/>
    <property type="match status" value="1"/>
</dbReference>
<dbReference type="FunFam" id="3.90.550.10:FF:000168">
    <property type="entry name" value="8-amino-3,8-dideoxy-manno-octulosonate cytidylyltransferase"/>
    <property type="match status" value="1"/>
</dbReference>
<dbReference type="Gene3D" id="3.90.550.10">
    <property type="entry name" value="Spore Coat Polysaccharide Biosynthesis Protein SpsA, Chain A"/>
    <property type="match status" value="1"/>
</dbReference>
<dbReference type="HAMAP" id="MF_00057">
    <property type="entry name" value="KdsB"/>
    <property type="match status" value="1"/>
</dbReference>
<dbReference type="InterPro" id="IPR003329">
    <property type="entry name" value="Cytidylyl_trans"/>
</dbReference>
<dbReference type="InterPro" id="IPR004528">
    <property type="entry name" value="KdsB"/>
</dbReference>
<dbReference type="InterPro" id="IPR029044">
    <property type="entry name" value="Nucleotide-diphossugar_trans"/>
</dbReference>
<dbReference type="NCBIfam" id="TIGR00466">
    <property type="entry name" value="kdsB"/>
    <property type="match status" value="1"/>
</dbReference>
<dbReference type="NCBIfam" id="NF003950">
    <property type="entry name" value="PRK05450.1-3"/>
    <property type="match status" value="1"/>
</dbReference>
<dbReference type="NCBIfam" id="NF003952">
    <property type="entry name" value="PRK05450.1-5"/>
    <property type="match status" value="1"/>
</dbReference>
<dbReference type="NCBIfam" id="NF009905">
    <property type="entry name" value="PRK13368.1"/>
    <property type="match status" value="1"/>
</dbReference>
<dbReference type="PANTHER" id="PTHR42866">
    <property type="entry name" value="3-DEOXY-MANNO-OCTULOSONATE CYTIDYLYLTRANSFERASE"/>
    <property type="match status" value="1"/>
</dbReference>
<dbReference type="PANTHER" id="PTHR42866:SF2">
    <property type="entry name" value="3-DEOXY-MANNO-OCTULOSONATE CYTIDYLYLTRANSFERASE, MITOCHONDRIAL"/>
    <property type="match status" value="1"/>
</dbReference>
<dbReference type="Pfam" id="PF02348">
    <property type="entry name" value="CTP_transf_3"/>
    <property type="match status" value="1"/>
</dbReference>
<dbReference type="SUPFAM" id="SSF53448">
    <property type="entry name" value="Nucleotide-diphospho-sugar transferases"/>
    <property type="match status" value="1"/>
</dbReference>
<sequence length="245" mass="27447">MNVTLLIPARYGSSRFPGKPLAPINGKPMIQHVYERASLAKGLTNIYVATDDDRIKAAVEGFGGKVVMTSPEAASGTDRINDAINQLGLKDDDLVINLQGDQPLIDPTSIEQVISLFERHPGEFEMATLGFEIVNKAELDDPMHVKMVFDNNNYALYFSRSRIPFGRDTQDYPVYKHLGVYAYTRKFVQAFAALPLGRLEDLEKLEQLRALEYGHKIKIAISAFDSIEVDTPEDIRKCEQRLAVD</sequence>
<gene>
    <name evidence="1" type="primary">kdsB</name>
    <name type="ordered locus">Sbal223_1984</name>
</gene>
<accession>B8E9F5</accession>
<keyword id="KW-0963">Cytoplasm</keyword>
<keyword id="KW-0448">Lipopolysaccharide biosynthesis</keyword>
<keyword id="KW-0548">Nucleotidyltransferase</keyword>
<keyword id="KW-0808">Transferase</keyword>
<evidence type="ECO:0000255" key="1">
    <source>
        <dbReference type="HAMAP-Rule" id="MF_00057"/>
    </source>
</evidence>
<protein>
    <recommendedName>
        <fullName evidence="1">8-amino-3,8-dideoxy-manno-octulosonate cytidylyltransferase</fullName>
        <ecNumber evidence="1">2.7.7.90</ecNumber>
    </recommendedName>
    <alternativeName>
        <fullName evidence="1">CMP-8-amino-3,8-dideoxy-manno-octulosonate synthase</fullName>
    </alternativeName>
</protein>
<name>KDSB_SHEB2</name>